<feature type="chain" id="PRO_0000427783" description="Cyclic pyranopterin monophosphate synthase 2">
    <location>
        <begin position="1"/>
        <end position="167"/>
    </location>
</feature>
<feature type="region of interest" description="Disordered" evidence="2">
    <location>
        <begin position="1"/>
        <end position="23"/>
    </location>
</feature>
<feature type="compositionally biased region" description="Basic and acidic residues" evidence="2">
    <location>
        <begin position="11"/>
        <end position="23"/>
    </location>
</feature>
<feature type="active site" evidence="1">
    <location>
        <position position="137"/>
    </location>
</feature>
<feature type="binding site" evidence="1">
    <location>
        <begin position="86"/>
        <end position="88"/>
    </location>
    <ligand>
        <name>substrate</name>
    </ligand>
</feature>
<feature type="binding site" evidence="1">
    <location>
        <begin position="122"/>
        <end position="123"/>
    </location>
    <ligand>
        <name>substrate</name>
    </ligand>
</feature>
<gene>
    <name type="primary">moaC2</name>
    <name type="ordered locus">MT0887</name>
</gene>
<name>MOAC2_MYCTO</name>
<comment type="function">
    <text evidence="1">Catalyzes the conversion of (8S)-3',8-cyclo-7,8-dihydroguanosine 5'-triphosphate to cyclic pyranopterin monophosphate (cPMP).</text>
</comment>
<comment type="catalytic activity">
    <reaction evidence="1">
        <text>(8S)-3',8-cyclo-7,8-dihydroguanosine 5'-triphosphate = cyclic pyranopterin phosphate + diphosphate</text>
        <dbReference type="Rhea" id="RHEA:49580"/>
        <dbReference type="ChEBI" id="CHEBI:33019"/>
        <dbReference type="ChEBI" id="CHEBI:59648"/>
        <dbReference type="ChEBI" id="CHEBI:131766"/>
        <dbReference type="EC" id="4.6.1.17"/>
    </reaction>
</comment>
<comment type="pathway">
    <text evidence="1">Cofactor biosynthesis; molybdopterin biosynthesis.</text>
</comment>
<comment type="subunit">
    <text evidence="1">Homohexamer; trimer of dimers.</text>
</comment>
<comment type="similarity">
    <text evidence="1">Belongs to the MoaC family.</text>
</comment>
<dbReference type="EC" id="4.6.1.17" evidence="1"/>
<dbReference type="EMBL" id="AE000516">
    <property type="protein sequence ID" value="AAK45128.1"/>
    <property type="molecule type" value="Genomic_DNA"/>
</dbReference>
<dbReference type="PIR" id="H70815">
    <property type="entry name" value="H70815"/>
</dbReference>
<dbReference type="SMR" id="P9WJR6"/>
<dbReference type="KEGG" id="mtc:MT0887"/>
<dbReference type="PATRIC" id="fig|83331.31.peg.952"/>
<dbReference type="HOGENOM" id="CLU_074693_1_1_11"/>
<dbReference type="UniPathway" id="UPA00344"/>
<dbReference type="Proteomes" id="UP000001020">
    <property type="component" value="Chromosome"/>
</dbReference>
<dbReference type="GO" id="GO:0061799">
    <property type="term" value="F:cyclic pyranopterin monophosphate synthase activity"/>
    <property type="evidence" value="ECO:0007669"/>
    <property type="project" value="UniProtKB-UniRule"/>
</dbReference>
<dbReference type="GO" id="GO:0006777">
    <property type="term" value="P:Mo-molybdopterin cofactor biosynthetic process"/>
    <property type="evidence" value="ECO:0007669"/>
    <property type="project" value="UniProtKB-UniRule"/>
</dbReference>
<dbReference type="CDD" id="cd01420">
    <property type="entry name" value="MoaC_PE"/>
    <property type="match status" value="1"/>
</dbReference>
<dbReference type="Gene3D" id="3.30.70.640">
    <property type="entry name" value="Molybdopterin cofactor biosynthesis C (MoaC) domain"/>
    <property type="match status" value="1"/>
</dbReference>
<dbReference type="HAMAP" id="MF_01224_B">
    <property type="entry name" value="MoaC_B"/>
    <property type="match status" value="1"/>
</dbReference>
<dbReference type="InterPro" id="IPR023045">
    <property type="entry name" value="MoaC"/>
</dbReference>
<dbReference type="InterPro" id="IPR047594">
    <property type="entry name" value="MoaC_bact/euk"/>
</dbReference>
<dbReference type="InterPro" id="IPR036522">
    <property type="entry name" value="MoaC_sf"/>
</dbReference>
<dbReference type="InterPro" id="IPR050105">
    <property type="entry name" value="MoCo_biosynth_MoaA/MoaC"/>
</dbReference>
<dbReference type="InterPro" id="IPR002820">
    <property type="entry name" value="Mopterin_CF_biosynth-C_dom"/>
</dbReference>
<dbReference type="NCBIfam" id="TIGR00581">
    <property type="entry name" value="moaC"/>
    <property type="match status" value="1"/>
</dbReference>
<dbReference type="NCBIfam" id="NF006870">
    <property type="entry name" value="PRK09364.1"/>
    <property type="match status" value="1"/>
</dbReference>
<dbReference type="PANTHER" id="PTHR22960:SF29">
    <property type="entry name" value="CYCLIC PYRANOPTERIN MONOPHOSPHATE SYNTHASE"/>
    <property type="match status" value="1"/>
</dbReference>
<dbReference type="PANTHER" id="PTHR22960">
    <property type="entry name" value="MOLYBDOPTERIN COFACTOR SYNTHESIS PROTEIN A"/>
    <property type="match status" value="1"/>
</dbReference>
<dbReference type="Pfam" id="PF01967">
    <property type="entry name" value="MoaC"/>
    <property type="match status" value="1"/>
</dbReference>
<dbReference type="SUPFAM" id="SSF55040">
    <property type="entry name" value="Molybdenum cofactor biosynthesis protein C, MoaC"/>
    <property type="match status" value="1"/>
</dbReference>
<proteinExistence type="inferred from homology"/>
<sequence length="167" mass="17598">MARASGASDYRSGELSHQDERGAAHMVDITEKATTKRTAVAAGILRTSAQVVALISTGGLPKGDALATARVAGIMAAKRTSDLIPLCHQLALTGVDVDFTVGQLDIEITATVRSTDRTGVEMEALTAVSVAALTLYDMIKAVDPGALIDDIRVLHKEGGRRGTWTRR</sequence>
<reference key="1">
    <citation type="journal article" date="2002" name="J. Bacteriol.">
        <title>Whole-genome comparison of Mycobacterium tuberculosis clinical and laboratory strains.</title>
        <authorList>
            <person name="Fleischmann R.D."/>
            <person name="Alland D."/>
            <person name="Eisen J.A."/>
            <person name="Carpenter L."/>
            <person name="White O."/>
            <person name="Peterson J.D."/>
            <person name="DeBoy R.T."/>
            <person name="Dodson R.J."/>
            <person name="Gwinn M.L."/>
            <person name="Haft D.H."/>
            <person name="Hickey E.K."/>
            <person name="Kolonay J.F."/>
            <person name="Nelson W.C."/>
            <person name="Umayam L.A."/>
            <person name="Ermolaeva M.D."/>
            <person name="Salzberg S.L."/>
            <person name="Delcher A."/>
            <person name="Utterback T.R."/>
            <person name="Weidman J.F."/>
            <person name="Khouri H.M."/>
            <person name="Gill J."/>
            <person name="Mikula A."/>
            <person name="Bishai W."/>
            <person name="Jacobs W.R. Jr."/>
            <person name="Venter J.C."/>
            <person name="Fraser C.M."/>
        </authorList>
    </citation>
    <scope>NUCLEOTIDE SEQUENCE [LARGE SCALE GENOMIC DNA]</scope>
    <source>
        <strain>CDC 1551 / Oshkosh</strain>
    </source>
</reference>
<keyword id="KW-0456">Lyase</keyword>
<keyword id="KW-0501">Molybdenum cofactor biosynthesis</keyword>
<keyword id="KW-1185">Reference proteome</keyword>
<evidence type="ECO:0000255" key="1">
    <source>
        <dbReference type="HAMAP-Rule" id="MF_01224"/>
    </source>
</evidence>
<evidence type="ECO:0000256" key="2">
    <source>
        <dbReference type="SAM" id="MobiDB-lite"/>
    </source>
</evidence>
<protein>
    <recommendedName>
        <fullName evidence="1">Cyclic pyranopterin monophosphate synthase 2</fullName>
        <ecNumber evidence="1">4.6.1.17</ecNumber>
    </recommendedName>
    <alternativeName>
        <fullName evidence="1">Molybdenum cofactor biosynthesis protein C 2</fullName>
    </alternativeName>
</protein>
<accession>P9WJR6</accession>
<accession>L0T7Y3</accession>
<accession>O53876</accession>
<accession>P0A5K6</accession>
<organism>
    <name type="scientific">Mycobacterium tuberculosis (strain CDC 1551 / Oshkosh)</name>
    <dbReference type="NCBI Taxonomy" id="83331"/>
    <lineage>
        <taxon>Bacteria</taxon>
        <taxon>Bacillati</taxon>
        <taxon>Actinomycetota</taxon>
        <taxon>Actinomycetes</taxon>
        <taxon>Mycobacteriales</taxon>
        <taxon>Mycobacteriaceae</taxon>
        <taxon>Mycobacterium</taxon>
        <taxon>Mycobacterium tuberculosis complex</taxon>
    </lineage>
</organism>